<protein>
    <recommendedName>
        <fullName evidence="1">UPF0246 protein PM0066</fullName>
    </recommendedName>
</protein>
<accession>Q9CPH5</accession>
<reference key="1">
    <citation type="journal article" date="2001" name="Proc. Natl. Acad. Sci. U.S.A.">
        <title>Complete genomic sequence of Pasteurella multocida Pm70.</title>
        <authorList>
            <person name="May B.J."/>
            <person name="Zhang Q."/>
            <person name="Li L.L."/>
            <person name="Paustian M.L."/>
            <person name="Whittam T.S."/>
            <person name="Kapur V."/>
        </authorList>
    </citation>
    <scope>NUCLEOTIDE SEQUENCE [LARGE SCALE GENOMIC DNA]</scope>
    <source>
        <strain>Pm70</strain>
    </source>
</reference>
<organism>
    <name type="scientific">Pasteurella multocida (strain Pm70)</name>
    <dbReference type="NCBI Taxonomy" id="272843"/>
    <lineage>
        <taxon>Bacteria</taxon>
        <taxon>Pseudomonadati</taxon>
        <taxon>Pseudomonadota</taxon>
        <taxon>Gammaproteobacteria</taxon>
        <taxon>Pasteurellales</taxon>
        <taxon>Pasteurellaceae</taxon>
        <taxon>Pasteurella</taxon>
    </lineage>
</organism>
<proteinExistence type="inferred from homology"/>
<name>Y066_PASMU</name>
<dbReference type="EMBL" id="AE004439">
    <property type="protein sequence ID" value="AAK02150.1"/>
    <property type="molecule type" value="Genomic_DNA"/>
</dbReference>
<dbReference type="SMR" id="Q9CPH5"/>
<dbReference type="STRING" id="272843.PM0066"/>
<dbReference type="EnsemblBacteria" id="AAK02150">
    <property type="protein sequence ID" value="AAK02150"/>
    <property type="gene ID" value="PM0066"/>
</dbReference>
<dbReference type="KEGG" id="pmu:PM0066"/>
<dbReference type="PATRIC" id="fig|272843.6.peg.68"/>
<dbReference type="HOGENOM" id="CLU_061989_0_0_6"/>
<dbReference type="OrthoDB" id="9777133at2"/>
<dbReference type="Proteomes" id="UP000000809">
    <property type="component" value="Chromosome"/>
</dbReference>
<dbReference type="GO" id="GO:0005829">
    <property type="term" value="C:cytosol"/>
    <property type="evidence" value="ECO:0007669"/>
    <property type="project" value="TreeGrafter"/>
</dbReference>
<dbReference type="GO" id="GO:0033194">
    <property type="term" value="P:response to hydroperoxide"/>
    <property type="evidence" value="ECO:0007669"/>
    <property type="project" value="TreeGrafter"/>
</dbReference>
<dbReference type="HAMAP" id="MF_00652">
    <property type="entry name" value="UPF0246"/>
    <property type="match status" value="1"/>
</dbReference>
<dbReference type="InterPro" id="IPR005583">
    <property type="entry name" value="YaaA"/>
</dbReference>
<dbReference type="NCBIfam" id="NF002541">
    <property type="entry name" value="PRK02101.1-1"/>
    <property type="match status" value="1"/>
</dbReference>
<dbReference type="NCBIfam" id="NF002542">
    <property type="entry name" value="PRK02101.1-3"/>
    <property type="match status" value="1"/>
</dbReference>
<dbReference type="PANTHER" id="PTHR30283:SF4">
    <property type="entry name" value="PEROXIDE STRESS RESISTANCE PROTEIN YAAA"/>
    <property type="match status" value="1"/>
</dbReference>
<dbReference type="PANTHER" id="PTHR30283">
    <property type="entry name" value="PEROXIDE STRESS RESPONSE PROTEIN YAAA"/>
    <property type="match status" value="1"/>
</dbReference>
<dbReference type="Pfam" id="PF03883">
    <property type="entry name" value="H2O2_YaaD"/>
    <property type="match status" value="1"/>
</dbReference>
<evidence type="ECO:0000255" key="1">
    <source>
        <dbReference type="HAMAP-Rule" id="MF_00652"/>
    </source>
</evidence>
<comment type="similarity">
    <text evidence="1">Belongs to the UPF0246 family.</text>
</comment>
<keyword id="KW-1185">Reference proteome</keyword>
<feature type="chain" id="PRO_0000203992" description="UPF0246 protein PM0066">
    <location>
        <begin position="1"/>
        <end position="258"/>
    </location>
</feature>
<gene>
    <name type="ordered locus">PM0066</name>
</gene>
<sequence>MLAIISPAKTLDFESAVPKFEFSQPQLTEYSAQLIDVCRQLSPAEIGSLMSISDKLAGLNFARFAEWQKAHTEQNSRAAIYAFKGDVYTGLDVESLSQQDVLFAQQHLRMLSGLYGLLKPLDLMQPYRLEMGTKLVNSKGKDLYAFWGNVITDTLQQAIEAQGDNVLVNLASDEYYKSVKESQLNVRIIKPVFLDNKNGKYKVISFYAKKARGLMCRYIIQNRLSEVEQLKGFDLGGYWFDPTSSSETEFVFKRDVAE</sequence>